<organism>
    <name type="scientific">Halalkalibacterium halodurans (strain ATCC BAA-125 / DSM 18197 / FERM 7344 / JCM 9153 / C-125)</name>
    <name type="common">Bacillus halodurans</name>
    <dbReference type="NCBI Taxonomy" id="272558"/>
    <lineage>
        <taxon>Bacteria</taxon>
        <taxon>Bacillati</taxon>
        <taxon>Bacillota</taxon>
        <taxon>Bacilli</taxon>
        <taxon>Bacillales</taxon>
        <taxon>Bacillaceae</taxon>
        <taxon>Halalkalibacterium (ex Joshi et al. 2022)</taxon>
    </lineage>
</organism>
<dbReference type="EC" id="2.4.2.29" evidence="1"/>
<dbReference type="EMBL" id="BA000004">
    <property type="protein sequence ID" value="BAB04947.1"/>
    <property type="molecule type" value="Genomic_DNA"/>
</dbReference>
<dbReference type="PIR" id="D83803">
    <property type="entry name" value="D83803"/>
</dbReference>
<dbReference type="RefSeq" id="WP_010897396.1">
    <property type="nucleotide sequence ID" value="NC_002570.2"/>
</dbReference>
<dbReference type="SMR" id="Q9KDI5"/>
<dbReference type="STRING" id="272558.gene:10727122"/>
<dbReference type="KEGG" id="bha:BH1228"/>
<dbReference type="eggNOG" id="COG0343">
    <property type="taxonomic scope" value="Bacteria"/>
</dbReference>
<dbReference type="HOGENOM" id="CLU_022060_0_1_9"/>
<dbReference type="OrthoDB" id="9805417at2"/>
<dbReference type="UniPathway" id="UPA00392"/>
<dbReference type="Proteomes" id="UP000001258">
    <property type="component" value="Chromosome"/>
</dbReference>
<dbReference type="GO" id="GO:0005829">
    <property type="term" value="C:cytosol"/>
    <property type="evidence" value="ECO:0007669"/>
    <property type="project" value="TreeGrafter"/>
</dbReference>
<dbReference type="GO" id="GO:0046872">
    <property type="term" value="F:metal ion binding"/>
    <property type="evidence" value="ECO:0007669"/>
    <property type="project" value="UniProtKB-KW"/>
</dbReference>
<dbReference type="GO" id="GO:0008479">
    <property type="term" value="F:tRNA-guanosine(34) queuine transglycosylase activity"/>
    <property type="evidence" value="ECO:0007669"/>
    <property type="project" value="UniProtKB-UniRule"/>
</dbReference>
<dbReference type="GO" id="GO:0008616">
    <property type="term" value="P:queuosine biosynthetic process"/>
    <property type="evidence" value="ECO:0007669"/>
    <property type="project" value="UniProtKB-UniRule"/>
</dbReference>
<dbReference type="GO" id="GO:0002099">
    <property type="term" value="P:tRNA wobble guanine modification"/>
    <property type="evidence" value="ECO:0007669"/>
    <property type="project" value="TreeGrafter"/>
</dbReference>
<dbReference type="GO" id="GO:0101030">
    <property type="term" value="P:tRNA-guanine transglycosylation"/>
    <property type="evidence" value="ECO:0007669"/>
    <property type="project" value="InterPro"/>
</dbReference>
<dbReference type="FunFam" id="3.20.20.105:FF:000001">
    <property type="entry name" value="Queuine tRNA-ribosyltransferase"/>
    <property type="match status" value="1"/>
</dbReference>
<dbReference type="Gene3D" id="3.20.20.105">
    <property type="entry name" value="Queuine tRNA-ribosyltransferase-like"/>
    <property type="match status" value="1"/>
</dbReference>
<dbReference type="HAMAP" id="MF_00168">
    <property type="entry name" value="Q_tRNA_Tgt"/>
    <property type="match status" value="1"/>
</dbReference>
<dbReference type="InterPro" id="IPR050076">
    <property type="entry name" value="ArchSynthase1/Queuine_TRR"/>
</dbReference>
<dbReference type="InterPro" id="IPR004803">
    <property type="entry name" value="TGT"/>
</dbReference>
<dbReference type="InterPro" id="IPR036511">
    <property type="entry name" value="TGT-like_sf"/>
</dbReference>
<dbReference type="InterPro" id="IPR002616">
    <property type="entry name" value="tRNA_ribo_trans-like"/>
</dbReference>
<dbReference type="NCBIfam" id="TIGR00430">
    <property type="entry name" value="Q_tRNA_tgt"/>
    <property type="match status" value="1"/>
</dbReference>
<dbReference type="NCBIfam" id="TIGR00449">
    <property type="entry name" value="tgt_general"/>
    <property type="match status" value="1"/>
</dbReference>
<dbReference type="PANTHER" id="PTHR46499">
    <property type="entry name" value="QUEUINE TRNA-RIBOSYLTRANSFERASE"/>
    <property type="match status" value="1"/>
</dbReference>
<dbReference type="PANTHER" id="PTHR46499:SF1">
    <property type="entry name" value="QUEUINE TRNA-RIBOSYLTRANSFERASE"/>
    <property type="match status" value="1"/>
</dbReference>
<dbReference type="Pfam" id="PF01702">
    <property type="entry name" value="TGT"/>
    <property type="match status" value="1"/>
</dbReference>
<dbReference type="SUPFAM" id="SSF51713">
    <property type="entry name" value="tRNA-guanine transglycosylase"/>
    <property type="match status" value="1"/>
</dbReference>
<name>TGT_HALH5</name>
<feature type="chain" id="PRO_0000135448" description="Queuine tRNA-ribosyltransferase">
    <location>
        <begin position="1"/>
        <end position="379"/>
    </location>
</feature>
<feature type="region of interest" description="RNA binding" evidence="1">
    <location>
        <begin position="249"/>
        <end position="255"/>
    </location>
</feature>
<feature type="region of interest" description="RNA binding; important for wobble base 34 recognition" evidence="1">
    <location>
        <begin position="273"/>
        <end position="277"/>
    </location>
</feature>
<feature type="active site" description="Proton acceptor" evidence="1">
    <location>
        <position position="94"/>
    </location>
</feature>
<feature type="active site" description="Nucleophile" evidence="1">
    <location>
        <position position="268"/>
    </location>
</feature>
<feature type="binding site" evidence="1">
    <location>
        <begin position="94"/>
        <end position="98"/>
    </location>
    <ligand>
        <name>substrate</name>
    </ligand>
</feature>
<feature type="binding site" evidence="1">
    <location>
        <position position="148"/>
    </location>
    <ligand>
        <name>substrate</name>
    </ligand>
</feature>
<feature type="binding site" evidence="1">
    <location>
        <position position="191"/>
    </location>
    <ligand>
        <name>substrate</name>
    </ligand>
</feature>
<feature type="binding site" evidence="1">
    <location>
        <position position="218"/>
    </location>
    <ligand>
        <name>substrate</name>
    </ligand>
</feature>
<feature type="binding site" evidence="1">
    <location>
        <position position="306"/>
    </location>
    <ligand>
        <name>Zn(2+)</name>
        <dbReference type="ChEBI" id="CHEBI:29105"/>
    </ligand>
</feature>
<feature type="binding site" evidence="1">
    <location>
        <position position="308"/>
    </location>
    <ligand>
        <name>Zn(2+)</name>
        <dbReference type="ChEBI" id="CHEBI:29105"/>
    </ligand>
</feature>
<feature type="binding site" evidence="1">
    <location>
        <position position="311"/>
    </location>
    <ligand>
        <name>Zn(2+)</name>
        <dbReference type="ChEBI" id="CHEBI:29105"/>
    </ligand>
</feature>
<feature type="binding site" evidence="1">
    <location>
        <position position="337"/>
    </location>
    <ligand>
        <name>Zn(2+)</name>
        <dbReference type="ChEBI" id="CHEBI:29105"/>
    </ligand>
</feature>
<evidence type="ECO:0000255" key="1">
    <source>
        <dbReference type="HAMAP-Rule" id="MF_00168"/>
    </source>
</evidence>
<sequence length="379" mass="43062">MAAVTYELIKTCKQSGARLGKLHTPHGTIETPIFMPVGTLATVKTMSPEELKQLGAQIILSNTYHLWLRPGHDIVKEAGGLHEFMNWDRPILTDSGGFQVFSLSDLRTIEEEGVHFRNHLSGEKLFLSPEGAMEIQNALGSDIMMAFDECPPYPAERDYMRPSVERTSRWAERCLKAHKRPEDQALFGIIQGGEYEDLRRQSAQDITSLDFPGYAIGGVSVGEPKDVMNRVLEFTTPLLPANKPRYLMGVGSPDSLIDGAIRGIDMFDCVLPTRIARNGTCMTSNGRLVVRNAKYARDFRSLDENCDCHVCQTYTRAYIRHLVKCDETFGFRLTTYHNLYFLLKLMKDVRQAILDDRLLDFREEFFEQYGFNQPNAKNF</sequence>
<protein>
    <recommendedName>
        <fullName evidence="1">Queuine tRNA-ribosyltransferase</fullName>
        <ecNumber evidence="1">2.4.2.29</ecNumber>
    </recommendedName>
    <alternativeName>
        <fullName evidence="1">Guanine insertion enzyme</fullName>
    </alternativeName>
    <alternativeName>
        <fullName evidence="1">tRNA-guanine transglycosylase</fullName>
    </alternativeName>
</protein>
<reference key="1">
    <citation type="journal article" date="2000" name="Nucleic Acids Res.">
        <title>Complete genome sequence of the alkaliphilic bacterium Bacillus halodurans and genomic sequence comparison with Bacillus subtilis.</title>
        <authorList>
            <person name="Takami H."/>
            <person name="Nakasone K."/>
            <person name="Takaki Y."/>
            <person name="Maeno G."/>
            <person name="Sasaki R."/>
            <person name="Masui N."/>
            <person name="Fuji F."/>
            <person name="Hirama C."/>
            <person name="Nakamura Y."/>
            <person name="Ogasawara N."/>
            <person name="Kuhara S."/>
            <person name="Horikoshi K."/>
        </authorList>
    </citation>
    <scope>NUCLEOTIDE SEQUENCE [LARGE SCALE GENOMIC DNA]</scope>
    <source>
        <strain>ATCC BAA-125 / DSM 18197 / FERM 7344 / JCM 9153 / C-125</strain>
    </source>
</reference>
<comment type="function">
    <text evidence="1">Catalyzes the base-exchange of a guanine (G) residue with the queuine precursor 7-aminomethyl-7-deazaguanine (PreQ1) at position 34 (anticodon wobble position) in tRNAs with GU(N) anticodons (tRNA-Asp, -Asn, -His and -Tyr). Catalysis occurs through a double-displacement mechanism. The nucleophile active site attacks the C1' of nucleotide 34 to detach the guanine base from the RNA, forming a covalent enzyme-RNA intermediate. The proton acceptor active site deprotonates the incoming PreQ1, allowing a nucleophilic attack on the C1' of the ribose to form the product. After dissociation, two additional enzymatic reactions on the tRNA convert PreQ1 to queuine (Q), resulting in the hypermodified nucleoside queuosine (7-(((4,5-cis-dihydroxy-2-cyclopenten-1-yl)amino)methyl)-7-deazaguanosine).</text>
</comment>
<comment type="catalytic activity">
    <reaction evidence="1">
        <text>7-aminomethyl-7-carbaguanine + guanosine(34) in tRNA = 7-aminomethyl-7-carbaguanosine(34) in tRNA + guanine</text>
        <dbReference type="Rhea" id="RHEA:24104"/>
        <dbReference type="Rhea" id="RHEA-COMP:10341"/>
        <dbReference type="Rhea" id="RHEA-COMP:10342"/>
        <dbReference type="ChEBI" id="CHEBI:16235"/>
        <dbReference type="ChEBI" id="CHEBI:58703"/>
        <dbReference type="ChEBI" id="CHEBI:74269"/>
        <dbReference type="ChEBI" id="CHEBI:82833"/>
        <dbReference type="EC" id="2.4.2.29"/>
    </reaction>
</comment>
<comment type="cofactor">
    <cofactor evidence="1">
        <name>Zn(2+)</name>
        <dbReference type="ChEBI" id="CHEBI:29105"/>
    </cofactor>
    <text evidence="1">Binds 1 zinc ion per subunit.</text>
</comment>
<comment type="pathway">
    <text evidence="1">tRNA modification; tRNA-queuosine biosynthesis.</text>
</comment>
<comment type="subunit">
    <text evidence="1">Homodimer. Within each dimer, one monomer is responsible for RNA recognition and catalysis, while the other monomer binds to the replacement base PreQ1.</text>
</comment>
<comment type="similarity">
    <text evidence="1">Belongs to the queuine tRNA-ribosyltransferase family.</text>
</comment>
<keyword id="KW-0328">Glycosyltransferase</keyword>
<keyword id="KW-0479">Metal-binding</keyword>
<keyword id="KW-0671">Queuosine biosynthesis</keyword>
<keyword id="KW-1185">Reference proteome</keyword>
<keyword id="KW-0808">Transferase</keyword>
<keyword id="KW-0819">tRNA processing</keyword>
<keyword id="KW-0862">Zinc</keyword>
<proteinExistence type="inferred from homology"/>
<accession>Q9KDI5</accession>
<gene>
    <name evidence="1" type="primary">tgt</name>
    <name type="ordered locus">BH1228</name>
</gene>